<comment type="function">
    <text evidence="1">This protein binds to the 23S rRNA, and is important in its secondary structure. It is located near the subunit interface in the base of the L7/L12 stalk, and near the tRNA binding site of the peptidyltransferase center.</text>
</comment>
<comment type="subunit">
    <text evidence="1">Part of the 50S ribosomal subunit.</text>
</comment>
<comment type="similarity">
    <text evidence="1">Belongs to the universal ribosomal protein uL6 family.</text>
</comment>
<feature type="chain" id="PRO_0000260981" description="Large ribosomal subunit protein uL6">
    <location>
        <begin position="1"/>
        <end position="175"/>
    </location>
</feature>
<gene>
    <name evidence="1" type="primary">rplF</name>
    <name type="ordered locus">PD_0452</name>
</gene>
<organism>
    <name type="scientific">Xylella fastidiosa (strain Temecula1 / ATCC 700964)</name>
    <dbReference type="NCBI Taxonomy" id="183190"/>
    <lineage>
        <taxon>Bacteria</taxon>
        <taxon>Pseudomonadati</taxon>
        <taxon>Pseudomonadota</taxon>
        <taxon>Gammaproteobacteria</taxon>
        <taxon>Lysobacterales</taxon>
        <taxon>Lysobacteraceae</taxon>
        <taxon>Xylella</taxon>
    </lineage>
</organism>
<keyword id="KW-1185">Reference proteome</keyword>
<keyword id="KW-0687">Ribonucleoprotein</keyword>
<keyword id="KW-0689">Ribosomal protein</keyword>
<keyword id="KW-0694">RNA-binding</keyword>
<keyword id="KW-0699">rRNA-binding</keyword>
<evidence type="ECO:0000255" key="1">
    <source>
        <dbReference type="HAMAP-Rule" id="MF_01365"/>
    </source>
</evidence>
<evidence type="ECO:0000305" key="2"/>
<sequence>MSRVAKKPISIPKGVEVSVQSDMLTVKGVKGVLTFPKSDNVNVVMDGDILTLSANDHSHVSLAGTVRAILSNMIKGVSIGFERKLELVGVGYRASMQGKDLNLSLGFSHPLLFVPPEGINLLTPSQTEVVVQGIDKQRVGEVAAKIRNFRPPEPYKGKGLKYATEAIMRKEAKKA</sequence>
<protein>
    <recommendedName>
        <fullName evidence="1">Large ribosomal subunit protein uL6</fullName>
    </recommendedName>
    <alternativeName>
        <fullName evidence="2">50S ribosomal protein L6</fullName>
    </alternativeName>
</protein>
<reference key="1">
    <citation type="journal article" date="2003" name="J. Bacteriol.">
        <title>Comparative analyses of the complete genome sequences of Pierce's disease and citrus variegated chlorosis strains of Xylella fastidiosa.</title>
        <authorList>
            <person name="Van Sluys M.A."/>
            <person name="de Oliveira M.C."/>
            <person name="Monteiro-Vitorello C.B."/>
            <person name="Miyaki C.Y."/>
            <person name="Furlan L.R."/>
            <person name="Camargo L.E.A."/>
            <person name="da Silva A.C.R."/>
            <person name="Moon D.H."/>
            <person name="Takita M.A."/>
            <person name="Lemos E.G.M."/>
            <person name="Machado M.A."/>
            <person name="Ferro M.I.T."/>
            <person name="da Silva F.R."/>
            <person name="Goldman M.H.S."/>
            <person name="Goldman G.H."/>
            <person name="Lemos M.V.F."/>
            <person name="El-Dorry H."/>
            <person name="Tsai S.M."/>
            <person name="Carrer H."/>
            <person name="Carraro D.M."/>
            <person name="de Oliveira R.C."/>
            <person name="Nunes L.R."/>
            <person name="Siqueira W.J."/>
            <person name="Coutinho L.L."/>
            <person name="Kimura E.T."/>
            <person name="Ferro E.S."/>
            <person name="Harakava R."/>
            <person name="Kuramae E.E."/>
            <person name="Marino C.L."/>
            <person name="Giglioti E."/>
            <person name="Abreu I.L."/>
            <person name="Alves L.M.C."/>
            <person name="do Amaral A.M."/>
            <person name="Baia G.S."/>
            <person name="Blanco S.R."/>
            <person name="Brito M.S."/>
            <person name="Cannavan F.S."/>
            <person name="Celestino A.V."/>
            <person name="da Cunha A.F."/>
            <person name="Fenille R.C."/>
            <person name="Ferro J.A."/>
            <person name="Formighieri E.F."/>
            <person name="Kishi L.T."/>
            <person name="Leoni S.G."/>
            <person name="Oliveira A.R."/>
            <person name="Rosa V.E. Jr."/>
            <person name="Sassaki F.T."/>
            <person name="Sena J.A.D."/>
            <person name="de Souza A.A."/>
            <person name="Truffi D."/>
            <person name="Tsukumo F."/>
            <person name="Yanai G.M."/>
            <person name="Zaros L.G."/>
            <person name="Civerolo E.L."/>
            <person name="Simpson A.J.G."/>
            <person name="Almeida N.F. Jr."/>
            <person name="Setubal J.C."/>
            <person name="Kitajima J.P."/>
        </authorList>
    </citation>
    <scope>NUCLEOTIDE SEQUENCE [LARGE SCALE GENOMIC DNA]</scope>
    <source>
        <strain>Temecula1 / ATCC 700964</strain>
    </source>
</reference>
<accession>Q87E67</accession>
<proteinExistence type="inferred from homology"/>
<name>RL6_XYLFT</name>
<dbReference type="EMBL" id="AE009442">
    <property type="protein sequence ID" value="AAO28331.1"/>
    <property type="molecule type" value="Genomic_DNA"/>
</dbReference>
<dbReference type="RefSeq" id="WP_004090121.1">
    <property type="nucleotide sequence ID" value="NC_004556.1"/>
</dbReference>
<dbReference type="SMR" id="Q87E67"/>
<dbReference type="GeneID" id="93904154"/>
<dbReference type="KEGG" id="xft:PD_0452"/>
<dbReference type="HOGENOM" id="CLU_065464_1_2_6"/>
<dbReference type="Proteomes" id="UP000002516">
    <property type="component" value="Chromosome"/>
</dbReference>
<dbReference type="GO" id="GO:0022625">
    <property type="term" value="C:cytosolic large ribosomal subunit"/>
    <property type="evidence" value="ECO:0007669"/>
    <property type="project" value="TreeGrafter"/>
</dbReference>
<dbReference type="GO" id="GO:0019843">
    <property type="term" value="F:rRNA binding"/>
    <property type="evidence" value="ECO:0007669"/>
    <property type="project" value="UniProtKB-UniRule"/>
</dbReference>
<dbReference type="GO" id="GO:0003735">
    <property type="term" value="F:structural constituent of ribosome"/>
    <property type="evidence" value="ECO:0007669"/>
    <property type="project" value="InterPro"/>
</dbReference>
<dbReference type="GO" id="GO:0002181">
    <property type="term" value="P:cytoplasmic translation"/>
    <property type="evidence" value="ECO:0007669"/>
    <property type="project" value="TreeGrafter"/>
</dbReference>
<dbReference type="FunFam" id="3.90.930.12:FF:000001">
    <property type="entry name" value="50S ribosomal protein L6"/>
    <property type="match status" value="1"/>
</dbReference>
<dbReference type="Gene3D" id="3.90.930.12">
    <property type="entry name" value="Ribosomal protein L6, alpha-beta domain"/>
    <property type="match status" value="2"/>
</dbReference>
<dbReference type="HAMAP" id="MF_01365_B">
    <property type="entry name" value="Ribosomal_uL6_B"/>
    <property type="match status" value="1"/>
</dbReference>
<dbReference type="InterPro" id="IPR000702">
    <property type="entry name" value="Ribosomal_uL6-like"/>
</dbReference>
<dbReference type="InterPro" id="IPR036789">
    <property type="entry name" value="Ribosomal_uL6-like_a/b-dom_sf"/>
</dbReference>
<dbReference type="InterPro" id="IPR020040">
    <property type="entry name" value="Ribosomal_uL6_a/b-dom"/>
</dbReference>
<dbReference type="InterPro" id="IPR019906">
    <property type="entry name" value="Ribosomal_uL6_bac-type"/>
</dbReference>
<dbReference type="InterPro" id="IPR002358">
    <property type="entry name" value="Ribosomal_uL6_CS"/>
</dbReference>
<dbReference type="NCBIfam" id="TIGR03654">
    <property type="entry name" value="L6_bact"/>
    <property type="match status" value="1"/>
</dbReference>
<dbReference type="PANTHER" id="PTHR11655">
    <property type="entry name" value="60S/50S RIBOSOMAL PROTEIN L6/L9"/>
    <property type="match status" value="1"/>
</dbReference>
<dbReference type="PANTHER" id="PTHR11655:SF14">
    <property type="entry name" value="LARGE RIBOSOMAL SUBUNIT PROTEIN UL6M"/>
    <property type="match status" value="1"/>
</dbReference>
<dbReference type="Pfam" id="PF00347">
    <property type="entry name" value="Ribosomal_L6"/>
    <property type="match status" value="2"/>
</dbReference>
<dbReference type="PIRSF" id="PIRSF002162">
    <property type="entry name" value="Ribosomal_L6"/>
    <property type="match status" value="1"/>
</dbReference>
<dbReference type="PRINTS" id="PR00059">
    <property type="entry name" value="RIBOSOMALL6"/>
</dbReference>
<dbReference type="SUPFAM" id="SSF56053">
    <property type="entry name" value="Ribosomal protein L6"/>
    <property type="match status" value="2"/>
</dbReference>
<dbReference type="PROSITE" id="PS00525">
    <property type="entry name" value="RIBOSOMAL_L6_1"/>
    <property type="match status" value="1"/>
</dbReference>